<reference key="1">
    <citation type="journal article" date="2004" name="Development">
        <title>Gene expression profiles of transcription factors and signaling molecules in the ascidian embryo: towards a comprehensive understanding of gene networks.</title>
        <authorList>
            <person name="Imai K.S."/>
            <person name="Hino K."/>
            <person name="Yagi K."/>
            <person name="Satoh N."/>
            <person name="Satou Y."/>
        </authorList>
    </citation>
    <scope>NUCLEOTIDE SEQUENCE [MRNA]</scope>
</reference>
<accession>Q4H3K6</accession>
<proteinExistence type="evidence at transcript level"/>
<evidence type="ECO:0000250" key="1"/>
<evidence type="ECO:0000255" key="2"/>
<evidence type="ECO:0000255" key="3">
    <source>
        <dbReference type="PROSITE-ProRule" id="PRU00114"/>
    </source>
</evidence>
<evidence type="ECO:0000255" key="4">
    <source>
        <dbReference type="PROSITE-ProRule" id="PRU00159"/>
    </source>
</evidence>
<evidence type="ECO:0000255" key="5">
    <source>
        <dbReference type="PROSITE-ProRule" id="PRU10028"/>
    </source>
</evidence>
<evidence type="ECO:0000256" key="6">
    <source>
        <dbReference type="SAM" id="MobiDB-lite"/>
    </source>
</evidence>
<evidence type="ECO:0000305" key="7"/>
<comment type="function">
    <text>Receptor for basic fibroblast growth factor.</text>
</comment>
<comment type="catalytic activity">
    <reaction evidence="5">
        <text>L-tyrosyl-[protein] + ATP = O-phospho-L-tyrosyl-[protein] + ADP + H(+)</text>
        <dbReference type="Rhea" id="RHEA:10596"/>
        <dbReference type="Rhea" id="RHEA-COMP:10136"/>
        <dbReference type="Rhea" id="RHEA-COMP:20101"/>
        <dbReference type="ChEBI" id="CHEBI:15378"/>
        <dbReference type="ChEBI" id="CHEBI:30616"/>
        <dbReference type="ChEBI" id="CHEBI:46858"/>
        <dbReference type="ChEBI" id="CHEBI:61978"/>
        <dbReference type="ChEBI" id="CHEBI:456216"/>
        <dbReference type="EC" id="2.7.10.1"/>
    </reaction>
</comment>
<comment type="subcellular location">
    <subcellularLocation>
        <location evidence="7">Membrane</location>
        <topology evidence="7">Single-pass membrane protein</topology>
    </subcellularLocation>
</comment>
<comment type="similarity">
    <text evidence="4">Belongs to the protein kinase superfamily. Tyr protein kinase family. Fibroblast growth factor receptor subfamily.</text>
</comment>
<keyword id="KW-0067">ATP-binding</keyword>
<keyword id="KW-1015">Disulfide bond</keyword>
<keyword id="KW-0325">Glycoprotein</keyword>
<keyword id="KW-0393">Immunoglobulin domain</keyword>
<keyword id="KW-0418">Kinase</keyword>
<keyword id="KW-0472">Membrane</keyword>
<keyword id="KW-0547">Nucleotide-binding</keyword>
<keyword id="KW-0597">Phosphoprotein</keyword>
<keyword id="KW-0675">Receptor</keyword>
<keyword id="KW-1185">Reference proteome</keyword>
<keyword id="KW-0677">Repeat</keyword>
<keyword id="KW-0732">Signal</keyword>
<keyword id="KW-0808">Transferase</keyword>
<keyword id="KW-0812">Transmembrane</keyword>
<keyword id="KW-1133">Transmembrane helix</keyword>
<keyword id="KW-0829">Tyrosine-protein kinase</keyword>
<sequence>MIQLQNTFIFIALTIFTSASTTSLKNETKPLNTISTLAAQTNISNPEEDLFDTNGAPKSDTVNASTTTDRHKIPRWVNEQKMQKRLHAEPAGNTVQFRCAVQGARPITVDWYKDGEPIKKNGRLGGYKFRQRNQQISLESVIMSDRAKYMCVAHNKYGSINHTYELDVVARIPIPPVLSADGMKNQTVKVGSTVTFRCRIVYSDAHPHVEWLKYNVNVTVLKRAGINTTDAEMEKLTLKNVSFADAGEYTCLAGNSIGVSHVSAWLTVLPVVDENDVWTEEIPQDTHYLIYIFGVVCFIILLAFIVYMCNSRYQNKDPPRLIPIENPDNIPPMSKMEEPVMLFGNEQAWRRMCLPHADHIEINIQPDLQWELKREDILLHERIDEGFFGQVFRADLIRCAGGRKEKVDAAVKMLKSTRTEKDMLDLLTEMDQMKRVGKHKNIVNLLGVCTQNGILWLVTEYAQKGNLRDYLRRNRPSELQYELSTPDSPAPPRDEPLTLRALMSASHQVARGMEYLSQKKCIHRDLAARNVLVANDFVMKIADFGLARDIRSNDYYRKETRGHLPYKWMALEAMTDNMFTHATDVWSFGILLWEIFSLGGSPYPGVKTHDLVRFLRNGDRLEQPQFASSELYRLMRDCWEESPRRRPQFRQLVEDLDRMLASSSSLEYIDLNSPCEADYLPSDVDSNEDTESRDSANATGEDSDSVFEPIDGHGAHAYEVDEAGPLLNPQPDANIVCNGHARMQSDV</sequence>
<gene>
    <name type="primary">FGFR</name>
</gene>
<name>FGFR_CIOIN</name>
<organism>
    <name type="scientific">Ciona intestinalis</name>
    <name type="common">Transparent sea squirt</name>
    <name type="synonym">Ascidia intestinalis</name>
    <dbReference type="NCBI Taxonomy" id="7719"/>
    <lineage>
        <taxon>Eukaryota</taxon>
        <taxon>Metazoa</taxon>
        <taxon>Chordata</taxon>
        <taxon>Tunicata</taxon>
        <taxon>Ascidiacea</taxon>
        <taxon>Phlebobranchia</taxon>
        <taxon>Cionidae</taxon>
        <taxon>Ciona</taxon>
    </lineage>
</organism>
<feature type="signal peptide" evidence="2">
    <location>
        <begin position="1"/>
        <end position="24"/>
    </location>
</feature>
<feature type="chain" id="PRO_0000249210" description="Fibroblast growth factor receptor">
    <location>
        <begin position="25"/>
        <end position="747"/>
    </location>
</feature>
<feature type="topological domain" description="Extracellular" evidence="2">
    <location>
        <begin position="25"/>
        <end position="288"/>
    </location>
</feature>
<feature type="transmembrane region" description="Helical" evidence="2">
    <location>
        <begin position="289"/>
        <end position="309"/>
    </location>
</feature>
<feature type="topological domain" description="Cytoplasmic" evidence="2">
    <location>
        <begin position="310"/>
        <end position="747"/>
    </location>
</feature>
<feature type="domain" description="Ig-like C2-type 1">
    <location>
        <begin position="74"/>
        <end position="167"/>
    </location>
</feature>
<feature type="domain" description="Ig-like C2-type 2">
    <location>
        <begin position="175"/>
        <end position="267"/>
    </location>
</feature>
<feature type="domain" description="Protein kinase" evidence="4">
    <location>
        <begin position="377"/>
        <end position="660"/>
    </location>
</feature>
<feature type="region of interest" description="Disordered" evidence="6">
    <location>
        <begin position="47"/>
        <end position="68"/>
    </location>
</feature>
<feature type="region of interest" description="Disordered" evidence="6">
    <location>
        <begin position="679"/>
        <end position="731"/>
    </location>
</feature>
<feature type="compositionally biased region" description="Basic and acidic residues" evidence="6">
    <location>
        <begin position="710"/>
        <end position="719"/>
    </location>
</feature>
<feature type="active site" description="Proton acceptor" evidence="4 5">
    <location>
        <position position="525"/>
    </location>
</feature>
<feature type="binding site" evidence="4">
    <location>
        <begin position="383"/>
        <end position="391"/>
    </location>
    <ligand>
        <name>ATP</name>
        <dbReference type="ChEBI" id="CHEBI:30616"/>
    </ligand>
</feature>
<feature type="binding site" evidence="4">
    <location>
        <position position="412"/>
    </location>
    <ligand>
        <name>ATP</name>
        <dbReference type="ChEBI" id="CHEBI:30616"/>
    </ligand>
</feature>
<feature type="modified residue" description="Phosphotyrosine; by autocatalysis" evidence="1">
    <location>
        <position position="556"/>
    </location>
</feature>
<feature type="glycosylation site" description="N-linked (GlcNAc...) asparagine" evidence="2">
    <location>
        <position position="26"/>
    </location>
</feature>
<feature type="glycosylation site" description="N-linked (GlcNAc...) asparagine" evidence="2">
    <location>
        <position position="42"/>
    </location>
</feature>
<feature type="glycosylation site" description="N-linked (GlcNAc...) asparagine" evidence="2">
    <location>
        <position position="63"/>
    </location>
</feature>
<feature type="glycosylation site" description="N-linked (GlcNAc...) asparagine" evidence="2">
    <location>
        <position position="161"/>
    </location>
</feature>
<feature type="glycosylation site" description="N-linked (GlcNAc...) asparagine" evidence="2">
    <location>
        <position position="185"/>
    </location>
</feature>
<feature type="glycosylation site" description="N-linked (GlcNAc...) asparagine" evidence="2">
    <location>
        <position position="217"/>
    </location>
</feature>
<feature type="glycosylation site" description="N-linked (GlcNAc...) asparagine" evidence="2">
    <location>
        <position position="227"/>
    </location>
</feature>
<feature type="glycosylation site" description="N-linked (GlcNAc...) asparagine" evidence="2">
    <location>
        <position position="240"/>
    </location>
</feature>
<feature type="disulfide bond" evidence="3">
    <location>
        <begin position="99"/>
        <end position="151"/>
    </location>
</feature>
<feature type="disulfide bond" evidence="3">
    <location>
        <begin position="198"/>
        <end position="251"/>
    </location>
</feature>
<dbReference type="EC" id="2.7.10.1"/>
<dbReference type="EMBL" id="AB210416">
    <property type="protein sequence ID" value="BAE06421.1"/>
    <property type="molecule type" value="mRNA"/>
</dbReference>
<dbReference type="RefSeq" id="NP_001037820.1">
    <property type="nucleotide sequence ID" value="NM_001044355.1"/>
</dbReference>
<dbReference type="SMR" id="Q4H3K6"/>
<dbReference type="STRING" id="7719.ENSCINP00000001598"/>
<dbReference type="GlyCosmos" id="Q4H3K6">
    <property type="glycosylation" value="8 sites, No reported glycans"/>
</dbReference>
<dbReference type="GeneID" id="445706"/>
<dbReference type="KEGG" id="cin:445706"/>
<dbReference type="CTD" id="373310"/>
<dbReference type="eggNOG" id="KOG0200">
    <property type="taxonomic scope" value="Eukaryota"/>
</dbReference>
<dbReference type="InParanoid" id="Q4H3K6"/>
<dbReference type="OrthoDB" id="5984265at2759"/>
<dbReference type="Proteomes" id="UP000008144">
    <property type="component" value="Unplaced"/>
</dbReference>
<dbReference type="GO" id="GO:0005886">
    <property type="term" value="C:plasma membrane"/>
    <property type="evidence" value="ECO:0000318"/>
    <property type="project" value="GO_Central"/>
</dbReference>
<dbReference type="GO" id="GO:0043235">
    <property type="term" value="C:receptor complex"/>
    <property type="evidence" value="ECO:0000318"/>
    <property type="project" value="GO_Central"/>
</dbReference>
<dbReference type="GO" id="GO:0005524">
    <property type="term" value="F:ATP binding"/>
    <property type="evidence" value="ECO:0007669"/>
    <property type="project" value="UniProtKB-KW"/>
</dbReference>
<dbReference type="GO" id="GO:0017134">
    <property type="term" value="F:fibroblast growth factor binding"/>
    <property type="evidence" value="ECO:0000318"/>
    <property type="project" value="GO_Central"/>
</dbReference>
<dbReference type="GO" id="GO:0005007">
    <property type="term" value="F:fibroblast growth factor receptor activity"/>
    <property type="evidence" value="ECO:0000318"/>
    <property type="project" value="GO_Central"/>
</dbReference>
<dbReference type="GO" id="GO:0008543">
    <property type="term" value="P:fibroblast growth factor receptor signaling pathway"/>
    <property type="evidence" value="ECO:0000318"/>
    <property type="project" value="GO_Central"/>
</dbReference>
<dbReference type="GO" id="GO:0008284">
    <property type="term" value="P:positive regulation of cell population proliferation"/>
    <property type="evidence" value="ECO:0000318"/>
    <property type="project" value="GO_Central"/>
</dbReference>
<dbReference type="GO" id="GO:0043410">
    <property type="term" value="P:positive regulation of MAPK cascade"/>
    <property type="evidence" value="ECO:0000318"/>
    <property type="project" value="GO_Central"/>
</dbReference>
<dbReference type="CDD" id="cd05857">
    <property type="entry name" value="IgI_2_FGFR"/>
    <property type="match status" value="1"/>
</dbReference>
<dbReference type="CDD" id="cd04974">
    <property type="entry name" value="IgI_3_FGFR"/>
    <property type="match status" value="1"/>
</dbReference>
<dbReference type="FunFam" id="1.10.510.10:FF:000007">
    <property type="entry name" value="Fibroblast growth factor receptor"/>
    <property type="match status" value="1"/>
</dbReference>
<dbReference type="FunFam" id="2.60.40.10:FF:000016">
    <property type="entry name" value="Fibroblast growth factor receptor"/>
    <property type="match status" value="1"/>
</dbReference>
<dbReference type="FunFam" id="2.60.40.10:FF:000020">
    <property type="entry name" value="Fibroblast growth factor receptor"/>
    <property type="match status" value="1"/>
</dbReference>
<dbReference type="FunFam" id="3.30.200.20:FF:001297">
    <property type="entry name" value="Fibroblast growth factor receptor"/>
    <property type="match status" value="1"/>
</dbReference>
<dbReference type="Gene3D" id="2.60.40.10">
    <property type="entry name" value="Immunoglobulins"/>
    <property type="match status" value="2"/>
</dbReference>
<dbReference type="Gene3D" id="3.30.200.20">
    <property type="entry name" value="Phosphorylase Kinase, domain 1"/>
    <property type="match status" value="1"/>
</dbReference>
<dbReference type="Gene3D" id="1.10.510.10">
    <property type="entry name" value="Transferase(Phosphotransferase) domain 1"/>
    <property type="match status" value="1"/>
</dbReference>
<dbReference type="InterPro" id="IPR016248">
    <property type="entry name" value="FGF_rcpt_fam"/>
</dbReference>
<dbReference type="InterPro" id="IPR007110">
    <property type="entry name" value="Ig-like_dom"/>
</dbReference>
<dbReference type="InterPro" id="IPR036179">
    <property type="entry name" value="Ig-like_dom_sf"/>
</dbReference>
<dbReference type="InterPro" id="IPR013783">
    <property type="entry name" value="Ig-like_fold"/>
</dbReference>
<dbReference type="InterPro" id="IPR013098">
    <property type="entry name" value="Ig_I-set"/>
</dbReference>
<dbReference type="InterPro" id="IPR003599">
    <property type="entry name" value="Ig_sub"/>
</dbReference>
<dbReference type="InterPro" id="IPR003598">
    <property type="entry name" value="Ig_sub2"/>
</dbReference>
<dbReference type="InterPro" id="IPR011009">
    <property type="entry name" value="Kinase-like_dom_sf"/>
</dbReference>
<dbReference type="InterPro" id="IPR000719">
    <property type="entry name" value="Prot_kinase_dom"/>
</dbReference>
<dbReference type="InterPro" id="IPR050122">
    <property type="entry name" value="RTK"/>
</dbReference>
<dbReference type="InterPro" id="IPR001245">
    <property type="entry name" value="Ser-Thr/Tyr_kinase_cat_dom"/>
</dbReference>
<dbReference type="InterPro" id="IPR008266">
    <property type="entry name" value="Tyr_kinase_AS"/>
</dbReference>
<dbReference type="InterPro" id="IPR020635">
    <property type="entry name" value="Tyr_kinase_cat_dom"/>
</dbReference>
<dbReference type="PANTHER" id="PTHR24416:SF550">
    <property type="entry name" value="FIBROBLAST GROWTH FACTOR RECEPTOR HOMOLOG 1-RELATED"/>
    <property type="match status" value="1"/>
</dbReference>
<dbReference type="PANTHER" id="PTHR24416">
    <property type="entry name" value="TYROSINE-PROTEIN KINASE RECEPTOR"/>
    <property type="match status" value="1"/>
</dbReference>
<dbReference type="Pfam" id="PF07679">
    <property type="entry name" value="I-set"/>
    <property type="match status" value="2"/>
</dbReference>
<dbReference type="Pfam" id="PF07714">
    <property type="entry name" value="PK_Tyr_Ser-Thr"/>
    <property type="match status" value="1"/>
</dbReference>
<dbReference type="PIRSF" id="PIRSF000628">
    <property type="entry name" value="FGFR"/>
    <property type="match status" value="1"/>
</dbReference>
<dbReference type="PRINTS" id="PR00109">
    <property type="entry name" value="TYRKINASE"/>
</dbReference>
<dbReference type="SMART" id="SM00409">
    <property type="entry name" value="IG"/>
    <property type="match status" value="2"/>
</dbReference>
<dbReference type="SMART" id="SM00408">
    <property type="entry name" value="IGc2"/>
    <property type="match status" value="2"/>
</dbReference>
<dbReference type="SMART" id="SM00219">
    <property type="entry name" value="TyrKc"/>
    <property type="match status" value="1"/>
</dbReference>
<dbReference type="SUPFAM" id="SSF48726">
    <property type="entry name" value="Immunoglobulin"/>
    <property type="match status" value="2"/>
</dbReference>
<dbReference type="SUPFAM" id="SSF56112">
    <property type="entry name" value="Protein kinase-like (PK-like)"/>
    <property type="match status" value="1"/>
</dbReference>
<dbReference type="PROSITE" id="PS50835">
    <property type="entry name" value="IG_LIKE"/>
    <property type="match status" value="2"/>
</dbReference>
<dbReference type="PROSITE" id="PS50011">
    <property type="entry name" value="PROTEIN_KINASE_DOM"/>
    <property type="match status" value="1"/>
</dbReference>
<dbReference type="PROSITE" id="PS00109">
    <property type="entry name" value="PROTEIN_KINASE_TYR"/>
    <property type="match status" value="1"/>
</dbReference>
<protein>
    <recommendedName>
        <fullName>Fibroblast growth factor receptor</fullName>
        <shortName>Ci-FGFR</shortName>
        <ecNumber>2.7.10.1</ecNumber>
    </recommendedName>
</protein>